<protein>
    <recommendedName>
        <fullName evidence="1">7-cyano-7-deazaguanine synthase</fullName>
        <ecNumber evidence="1">6.3.4.20</ecNumber>
    </recommendedName>
    <alternativeName>
        <fullName evidence="1">7-cyano-7-carbaguanine synthase</fullName>
    </alternativeName>
    <alternativeName>
        <fullName evidence="1">PreQ(0) synthase</fullName>
    </alternativeName>
    <alternativeName>
        <fullName evidence="1">Queuosine biosynthesis protein QueC</fullName>
    </alternativeName>
</protein>
<proteinExistence type="inferred from homology"/>
<keyword id="KW-0067">ATP-binding</keyword>
<keyword id="KW-0436">Ligase</keyword>
<keyword id="KW-0479">Metal-binding</keyword>
<keyword id="KW-0547">Nucleotide-binding</keyword>
<keyword id="KW-0671">Queuosine biosynthesis</keyword>
<keyword id="KW-1185">Reference proteome</keyword>
<keyword id="KW-0862">Zinc</keyword>
<sequence>MTNTEKRAVILLSGGLDSATVVAMARAEGYACYTMSFDYGQRHRAELDAAARVARDLGAVEHKVIGLNLSGIGGSALTDSSIAVPESPSEGIPVTYVPARNTVFLSLALGWAEVLGARDIFIGVNAVDYSGYPDCRPEFVESFERMANLATKAGVEGQGFTIRAPLQNLSKSDIVKAGIALGVDYALTVSCYQADDQGRACGKCDSCRLRAEGFTASGMSDPTRYF</sequence>
<name>QUEC_PSESM</name>
<evidence type="ECO:0000255" key="1">
    <source>
        <dbReference type="HAMAP-Rule" id="MF_01633"/>
    </source>
</evidence>
<dbReference type="EC" id="6.3.4.20" evidence="1"/>
<dbReference type="EMBL" id="AE016853">
    <property type="protein sequence ID" value="AAO57427.1"/>
    <property type="molecule type" value="Genomic_DNA"/>
</dbReference>
<dbReference type="RefSeq" id="NP_793732.1">
    <property type="nucleotide sequence ID" value="NC_004578.1"/>
</dbReference>
<dbReference type="SMR" id="Q87Y44"/>
<dbReference type="STRING" id="223283.PSPTO_3968"/>
<dbReference type="KEGG" id="pst:PSPTO_3968"/>
<dbReference type="PATRIC" id="fig|223283.9.peg.4067"/>
<dbReference type="eggNOG" id="COG0603">
    <property type="taxonomic scope" value="Bacteria"/>
</dbReference>
<dbReference type="HOGENOM" id="CLU_081854_1_1_6"/>
<dbReference type="OrthoDB" id="9789567at2"/>
<dbReference type="PhylomeDB" id="Q87Y44"/>
<dbReference type="UniPathway" id="UPA00391"/>
<dbReference type="Proteomes" id="UP000002515">
    <property type="component" value="Chromosome"/>
</dbReference>
<dbReference type="GO" id="GO:0005524">
    <property type="term" value="F:ATP binding"/>
    <property type="evidence" value="ECO:0007669"/>
    <property type="project" value="UniProtKB-UniRule"/>
</dbReference>
<dbReference type="GO" id="GO:0016879">
    <property type="term" value="F:ligase activity, forming carbon-nitrogen bonds"/>
    <property type="evidence" value="ECO:0007669"/>
    <property type="project" value="UniProtKB-UniRule"/>
</dbReference>
<dbReference type="GO" id="GO:0008270">
    <property type="term" value="F:zinc ion binding"/>
    <property type="evidence" value="ECO:0007669"/>
    <property type="project" value="UniProtKB-UniRule"/>
</dbReference>
<dbReference type="GO" id="GO:0008616">
    <property type="term" value="P:queuosine biosynthetic process"/>
    <property type="evidence" value="ECO:0007669"/>
    <property type="project" value="UniProtKB-UniRule"/>
</dbReference>
<dbReference type="CDD" id="cd01995">
    <property type="entry name" value="QueC-like"/>
    <property type="match status" value="1"/>
</dbReference>
<dbReference type="FunFam" id="3.40.50.620:FF:000131">
    <property type="entry name" value="7-cyano-7-deazaguanine synthase"/>
    <property type="match status" value="1"/>
</dbReference>
<dbReference type="Gene3D" id="3.40.50.620">
    <property type="entry name" value="HUPs"/>
    <property type="match status" value="1"/>
</dbReference>
<dbReference type="HAMAP" id="MF_01633">
    <property type="entry name" value="QueC"/>
    <property type="match status" value="1"/>
</dbReference>
<dbReference type="InterPro" id="IPR018317">
    <property type="entry name" value="QueC"/>
</dbReference>
<dbReference type="InterPro" id="IPR014729">
    <property type="entry name" value="Rossmann-like_a/b/a_fold"/>
</dbReference>
<dbReference type="NCBIfam" id="TIGR00364">
    <property type="entry name" value="7-cyano-7-deazaguanine synthase QueC"/>
    <property type="match status" value="1"/>
</dbReference>
<dbReference type="PANTHER" id="PTHR42914">
    <property type="entry name" value="7-CYANO-7-DEAZAGUANINE SYNTHASE"/>
    <property type="match status" value="1"/>
</dbReference>
<dbReference type="PANTHER" id="PTHR42914:SF1">
    <property type="entry name" value="7-CYANO-7-DEAZAGUANINE SYNTHASE"/>
    <property type="match status" value="1"/>
</dbReference>
<dbReference type="Pfam" id="PF06508">
    <property type="entry name" value="QueC"/>
    <property type="match status" value="1"/>
</dbReference>
<dbReference type="PIRSF" id="PIRSF006293">
    <property type="entry name" value="ExsB"/>
    <property type="match status" value="1"/>
</dbReference>
<dbReference type="SUPFAM" id="SSF52402">
    <property type="entry name" value="Adenine nucleotide alpha hydrolases-like"/>
    <property type="match status" value="1"/>
</dbReference>
<organism>
    <name type="scientific">Pseudomonas syringae pv. tomato (strain ATCC BAA-871 / DC3000)</name>
    <dbReference type="NCBI Taxonomy" id="223283"/>
    <lineage>
        <taxon>Bacteria</taxon>
        <taxon>Pseudomonadati</taxon>
        <taxon>Pseudomonadota</taxon>
        <taxon>Gammaproteobacteria</taxon>
        <taxon>Pseudomonadales</taxon>
        <taxon>Pseudomonadaceae</taxon>
        <taxon>Pseudomonas</taxon>
    </lineage>
</organism>
<reference key="1">
    <citation type="journal article" date="2003" name="Proc. Natl. Acad. Sci. U.S.A.">
        <title>The complete genome sequence of the Arabidopsis and tomato pathogen Pseudomonas syringae pv. tomato DC3000.</title>
        <authorList>
            <person name="Buell C.R."/>
            <person name="Joardar V."/>
            <person name="Lindeberg M."/>
            <person name="Selengut J."/>
            <person name="Paulsen I.T."/>
            <person name="Gwinn M.L."/>
            <person name="Dodson R.J."/>
            <person name="DeBoy R.T."/>
            <person name="Durkin A.S."/>
            <person name="Kolonay J.F."/>
            <person name="Madupu R."/>
            <person name="Daugherty S.C."/>
            <person name="Brinkac L.M."/>
            <person name="Beanan M.J."/>
            <person name="Haft D.H."/>
            <person name="Nelson W.C."/>
            <person name="Davidsen T.M."/>
            <person name="Zafar N."/>
            <person name="Zhou L."/>
            <person name="Liu J."/>
            <person name="Yuan Q."/>
            <person name="Khouri H.M."/>
            <person name="Fedorova N.B."/>
            <person name="Tran B."/>
            <person name="Russell D."/>
            <person name="Berry K.J."/>
            <person name="Utterback T.R."/>
            <person name="Van Aken S.E."/>
            <person name="Feldblyum T.V."/>
            <person name="D'Ascenzo M."/>
            <person name="Deng W.-L."/>
            <person name="Ramos A.R."/>
            <person name="Alfano J.R."/>
            <person name="Cartinhour S."/>
            <person name="Chatterjee A.K."/>
            <person name="Delaney T.P."/>
            <person name="Lazarowitz S.G."/>
            <person name="Martin G.B."/>
            <person name="Schneider D.J."/>
            <person name="Tang X."/>
            <person name="Bender C.L."/>
            <person name="White O."/>
            <person name="Fraser C.M."/>
            <person name="Collmer A."/>
        </authorList>
    </citation>
    <scope>NUCLEOTIDE SEQUENCE [LARGE SCALE GENOMIC DNA]</scope>
    <source>
        <strain>ATCC BAA-871 / DC3000</strain>
    </source>
</reference>
<feature type="chain" id="PRO_0000246892" description="7-cyano-7-deazaguanine synthase">
    <location>
        <begin position="1"/>
        <end position="226"/>
    </location>
</feature>
<feature type="binding site" evidence="1">
    <location>
        <begin position="12"/>
        <end position="22"/>
    </location>
    <ligand>
        <name>ATP</name>
        <dbReference type="ChEBI" id="CHEBI:30616"/>
    </ligand>
</feature>
<feature type="binding site" evidence="1">
    <location>
        <position position="191"/>
    </location>
    <ligand>
        <name>Zn(2+)</name>
        <dbReference type="ChEBI" id="CHEBI:29105"/>
    </ligand>
</feature>
<feature type="binding site" evidence="1">
    <location>
        <position position="201"/>
    </location>
    <ligand>
        <name>Zn(2+)</name>
        <dbReference type="ChEBI" id="CHEBI:29105"/>
    </ligand>
</feature>
<feature type="binding site" evidence="1">
    <location>
        <position position="204"/>
    </location>
    <ligand>
        <name>Zn(2+)</name>
        <dbReference type="ChEBI" id="CHEBI:29105"/>
    </ligand>
</feature>
<feature type="binding site" evidence="1">
    <location>
        <position position="207"/>
    </location>
    <ligand>
        <name>Zn(2+)</name>
        <dbReference type="ChEBI" id="CHEBI:29105"/>
    </ligand>
</feature>
<gene>
    <name evidence="1" type="primary">queC</name>
    <name type="ordered locus">PSPTO_3968</name>
</gene>
<accession>Q87Y44</accession>
<comment type="function">
    <text evidence="1">Catalyzes the ATP-dependent conversion of 7-carboxy-7-deazaguanine (CDG) to 7-cyano-7-deazaguanine (preQ(0)).</text>
</comment>
<comment type="catalytic activity">
    <reaction evidence="1">
        <text>7-carboxy-7-deazaguanine + NH4(+) + ATP = 7-cyano-7-deazaguanine + ADP + phosphate + H2O + H(+)</text>
        <dbReference type="Rhea" id="RHEA:27982"/>
        <dbReference type="ChEBI" id="CHEBI:15377"/>
        <dbReference type="ChEBI" id="CHEBI:15378"/>
        <dbReference type="ChEBI" id="CHEBI:28938"/>
        <dbReference type="ChEBI" id="CHEBI:30616"/>
        <dbReference type="ChEBI" id="CHEBI:43474"/>
        <dbReference type="ChEBI" id="CHEBI:45075"/>
        <dbReference type="ChEBI" id="CHEBI:61036"/>
        <dbReference type="ChEBI" id="CHEBI:456216"/>
        <dbReference type="EC" id="6.3.4.20"/>
    </reaction>
</comment>
<comment type="cofactor">
    <cofactor evidence="1">
        <name>Zn(2+)</name>
        <dbReference type="ChEBI" id="CHEBI:29105"/>
    </cofactor>
    <text evidence="1">Binds 1 zinc ion per subunit.</text>
</comment>
<comment type="pathway">
    <text evidence="1">Purine metabolism; 7-cyano-7-deazaguanine biosynthesis.</text>
</comment>
<comment type="similarity">
    <text evidence="1">Belongs to the QueC family.</text>
</comment>